<name>ATPE_BACP3</name>
<protein>
    <recommendedName>
        <fullName>ATP synthase epsilon chain</fullName>
    </recommendedName>
    <alternativeName>
        <fullName>ATP synthase F1 sector epsilon subunit</fullName>
    </alternativeName>
    <alternativeName>
        <fullName>F-ATPase epsilon subunit</fullName>
    </alternativeName>
</protein>
<keyword id="KW-0002">3D-structure</keyword>
<keyword id="KW-0066">ATP synthesis</keyword>
<keyword id="KW-1003">Cell membrane</keyword>
<keyword id="KW-0139">CF(1)</keyword>
<keyword id="KW-0903">Direct protein sequencing</keyword>
<keyword id="KW-0375">Hydrogen ion transport</keyword>
<keyword id="KW-0406">Ion transport</keyword>
<keyword id="KW-0472">Membrane</keyword>
<keyword id="KW-0813">Transport</keyword>
<accession>P07678</accession>
<accession>Q9KW63</accession>
<feature type="chain" id="PRO_0000188097" description="ATP synthase epsilon chain">
    <location>
        <begin position="1"/>
        <end position="132"/>
    </location>
</feature>
<feature type="sequence conflict" description="In Ref. 3; BAA96810." evidence="3" ref="3">
    <original>N</original>
    <variation>K</variation>
    <location>
        <position position="74"/>
    </location>
</feature>
<feature type="strand" evidence="4">
    <location>
        <begin position="4"/>
        <end position="10"/>
    </location>
</feature>
<feature type="strand" evidence="4">
    <location>
        <begin position="13"/>
        <end position="27"/>
    </location>
</feature>
<feature type="strand" evidence="4">
    <location>
        <begin position="30"/>
        <end position="34"/>
    </location>
</feature>
<feature type="strand" evidence="4">
    <location>
        <begin position="41"/>
        <end position="54"/>
    </location>
</feature>
<feature type="strand" evidence="4">
    <location>
        <begin position="57"/>
        <end position="71"/>
    </location>
</feature>
<feature type="strand" evidence="4">
    <location>
        <begin position="74"/>
        <end position="84"/>
    </location>
</feature>
<feature type="helix" evidence="4">
    <location>
        <begin position="85"/>
        <end position="87"/>
    </location>
</feature>
<feature type="helix" evidence="4">
    <location>
        <begin position="90"/>
        <end position="103"/>
    </location>
</feature>
<feature type="helix" evidence="4">
    <location>
        <begin position="112"/>
        <end position="129"/>
    </location>
</feature>
<comment type="function">
    <text>Produces ATP from ADP in the presence of a proton gradient across the membrane.</text>
</comment>
<comment type="subunit">
    <text evidence="2">F-type ATPases have 2 components, CF(1) - the catalytic core - and CF(0) - the membrane proton channel. CF(1) has five subunits: alpha(3), beta(3), gamma(1), delta(1), epsilon(1). CF(0) has three main subunits: a, b and c.</text>
</comment>
<comment type="subcellular location">
    <subcellularLocation>
        <location evidence="1">Cell membrane</location>
        <topology evidence="1">Peripheral membrane protein</topology>
    </subcellularLocation>
</comment>
<comment type="similarity">
    <text evidence="3">Belongs to the ATPase epsilon chain family.</text>
</comment>
<comment type="sequence caution" evidence="3">
    <conflict type="frameshift">
        <sequence resource="EMBL-CDS" id="BAA96810"/>
    </conflict>
</comment>
<reference key="1">
    <citation type="journal article" date="1986" name="Biochim. Biophys. Acta">
        <title>Stability of structures of the epsilon subunit and terminator of thermophilic ATPase.</title>
        <authorList>
            <person name="Saishu T."/>
            <person name="Nojima H."/>
            <person name="Kagawa Y."/>
        </authorList>
    </citation>
    <scope>NUCLEOTIDE SEQUENCE [GENOMIC DNA]</scope>
    <scope>PROTEIN SEQUENCE OF 1-2</scope>
    <scope>SUBUNIT</scope>
</reference>
<reference key="2">
    <citation type="journal article" date="1988" name="Biochim. Biophys. Acta">
        <title>Sequence and over-expression of subunits of adenosine triphosphate synthase in thermophilic bacterium PS3.</title>
        <authorList>
            <person name="Ohta S."/>
            <person name="Yohda M."/>
            <person name="Ishizuka M."/>
            <person name="Hirata H."/>
            <person name="Hamamoto T."/>
            <person name="Otawara-Hamamoto Y."/>
            <person name="Matsuda K."/>
            <person name="Kagawa Y."/>
        </authorList>
    </citation>
    <scope>NUCLEOTIDE SEQUENCE [GENOMIC DNA]</scope>
</reference>
<reference key="3">
    <citation type="journal article" date="2000" name="J. Biol. Chem.">
        <title>Movement of the helical domain of the epsilon subunit is required for the activation of thermophilic F1-ATPase.</title>
        <authorList>
            <person name="Kato-Yamada Y."/>
            <person name="Yoshida M."/>
            <person name="Hisabori T."/>
        </authorList>
    </citation>
    <scope>NUCLEOTIDE SEQUENCE [GENOMIC DNA]</scope>
</reference>
<dbReference type="EMBL" id="X03969">
    <property type="protein sequence ID" value="CAA27607.1"/>
    <property type="molecule type" value="Genomic_DNA"/>
</dbReference>
<dbReference type="EMBL" id="X07804">
    <property type="protein sequence ID" value="CAA30656.1"/>
    <property type="molecule type" value="Genomic_DNA"/>
</dbReference>
<dbReference type="EMBL" id="AB044942">
    <property type="protein sequence ID" value="BAA96810.1"/>
    <property type="status" value="ALT_FRAME"/>
    <property type="molecule type" value="Genomic_DNA"/>
</dbReference>
<dbReference type="PDB" id="2E5Y">
    <property type="method" value="X-ray"/>
    <property type="resolution" value="1.92 A"/>
    <property type="chains" value="A/B=1-132"/>
</dbReference>
<dbReference type="PDBsum" id="2E5Y"/>
<dbReference type="BMRB" id="P07678"/>
<dbReference type="SMR" id="P07678"/>
<dbReference type="TCDB" id="3.A.2.1.14">
    <property type="family name" value="the h+- or na+-translocating f-type, v-type and a-type atpase (f-atpase) superfamily"/>
</dbReference>
<dbReference type="EvolutionaryTrace" id="P07678"/>
<dbReference type="GO" id="GO:0005886">
    <property type="term" value="C:plasma membrane"/>
    <property type="evidence" value="ECO:0007669"/>
    <property type="project" value="UniProtKB-SubCell"/>
</dbReference>
<dbReference type="GO" id="GO:0045259">
    <property type="term" value="C:proton-transporting ATP synthase complex"/>
    <property type="evidence" value="ECO:0007669"/>
    <property type="project" value="UniProtKB-KW"/>
</dbReference>
<dbReference type="GO" id="GO:0005524">
    <property type="term" value="F:ATP binding"/>
    <property type="evidence" value="ECO:0007669"/>
    <property type="project" value="UniProtKB-UniRule"/>
</dbReference>
<dbReference type="GO" id="GO:0046933">
    <property type="term" value="F:proton-transporting ATP synthase activity, rotational mechanism"/>
    <property type="evidence" value="ECO:0007669"/>
    <property type="project" value="UniProtKB-UniRule"/>
</dbReference>
<dbReference type="CDD" id="cd12152">
    <property type="entry name" value="F1-ATPase_delta"/>
    <property type="match status" value="1"/>
</dbReference>
<dbReference type="FunFam" id="2.60.15.10:FF:000001">
    <property type="entry name" value="ATP synthase epsilon chain"/>
    <property type="match status" value="1"/>
</dbReference>
<dbReference type="Gene3D" id="1.20.5.440">
    <property type="entry name" value="ATP synthase delta/epsilon subunit, C-terminal domain"/>
    <property type="match status" value="1"/>
</dbReference>
<dbReference type="Gene3D" id="2.60.15.10">
    <property type="entry name" value="F0F1 ATP synthase delta/epsilon subunit, N-terminal"/>
    <property type="match status" value="1"/>
</dbReference>
<dbReference type="HAMAP" id="MF_00530">
    <property type="entry name" value="ATP_synth_epsil_bac"/>
    <property type="match status" value="1"/>
</dbReference>
<dbReference type="InterPro" id="IPR036794">
    <property type="entry name" value="ATP_F1_dsu/esu_C_sf"/>
</dbReference>
<dbReference type="InterPro" id="IPR001469">
    <property type="entry name" value="ATP_synth_F1_dsu/esu"/>
</dbReference>
<dbReference type="InterPro" id="IPR020546">
    <property type="entry name" value="ATP_synth_F1_dsu/esu_N"/>
</dbReference>
<dbReference type="InterPro" id="IPR020547">
    <property type="entry name" value="ATP_synth_F1_esu_C"/>
</dbReference>
<dbReference type="InterPro" id="IPR036771">
    <property type="entry name" value="ATPsynth_dsu/esu_N"/>
</dbReference>
<dbReference type="NCBIfam" id="TIGR01216">
    <property type="entry name" value="ATP_synt_epsi"/>
    <property type="match status" value="1"/>
</dbReference>
<dbReference type="NCBIfam" id="NF001846">
    <property type="entry name" value="PRK00571.1-3"/>
    <property type="match status" value="1"/>
</dbReference>
<dbReference type="NCBIfam" id="NF009980">
    <property type="entry name" value="PRK13446.1"/>
    <property type="match status" value="1"/>
</dbReference>
<dbReference type="PANTHER" id="PTHR13822">
    <property type="entry name" value="ATP SYNTHASE DELTA/EPSILON CHAIN"/>
    <property type="match status" value="1"/>
</dbReference>
<dbReference type="PANTHER" id="PTHR13822:SF10">
    <property type="entry name" value="ATP SYNTHASE EPSILON CHAIN, CHLOROPLASTIC"/>
    <property type="match status" value="1"/>
</dbReference>
<dbReference type="Pfam" id="PF00401">
    <property type="entry name" value="ATP-synt_DE"/>
    <property type="match status" value="1"/>
</dbReference>
<dbReference type="Pfam" id="PF02823">
    <property type="entry name" value="ATP-synt_DE_N"/>
    <property type="match status" value="1"/>
</dbReference>
<dbReference type="SUPFAM" id="SSF46604">
    <property type="entry name" value="Epsilon subunit of F1F0-ATP synthase C-terminal domain"/>
    <property type="match status" value="1"/>
</dbReference>
<dbReference type="SUPFAM" id="SSF51344">
    <property type="entry name" value="Epsilon subunit of F1F0-ATP synthase N-terminal domain"/>
    <property type="match status" value="1"/>
</dbReference>
<proteinExistence type="evidence at protein level"/>
<organism>
    <name type="scientific">Bacillus sp. (strain PS3)</name>
    <dbReference type="NCBI Taxonomy" id="2334"/>
    <lineage>
        <taxon>Bacteria</taxon>
        <taxon>Bacillati</taxon>
        <taxon>Bacillota</taxon>
        <taxon>Bacilli</taxon>
        <taxon>Bacillales</taxon>
        <taxon>Bacillaceae</taxon>
        <taxon>Bacillus</taxon>
    </lineage>
</organism>
<sequence>MKTIHVSVVTPDGPVYEDDVEMVSVKAKSGELGILPGHIPLVAPLEISAARLKKGGKTQYIAVSGGFLEVRPDNVTILAQAAERAEDIDVLRAKARKSGRTPLQSQQDDIDFKRAELALKRAMNRLSVAEMK</sequence>
<gene>
    <name type="primary">atpC</name>
</gene>
<evidence type="ECO:0000250" key="1"/>
<evidence type="ECO:0000269" key="2">
    <source>
    </source>
</evidence>
<evidence type="ECO:0000305" key="3"/>
<evidence type="ECO:0007829" key="4">
    <source>
        <dbReference type="PDB" id="2E5Y"/>
    </source>
</evidence>